<protein>
    <recommendedName>
        <fullName evidence="6">SPI-1 type 3 secretion system pilotin</fullName>
    </recommendedName>
    <alternativeName>
        <fullName>Invasion lipoprotein invH</fullName>
    </alternativeName>
</protein>
<evidence type="ECO:0000255" key="1">
    <source>
        <dbReference type="PROSITE-ProRule" id="PRU00303"/>
    </source>
</evidence>
<evidence type="ECO:0000269" key="2">
    <source>
    </source>
</evidence>
<evidence type="ECO:0000269" key="3">
    <source>
    </source>
</evidence>
<evidence type="ECO:0000269" key="4">
    <source>
    </source>
</evidence>
<evidence type="ECO:0000303" key="5">
    <source>
    </source>
</evidence>
<evidence type="ECO:0000305" key="6"/>
<evidence type="ECO:0007829" key="7">
    <source>
        <dbReference type="PDB" id="6XFJ"/>
    </source>
</evidence>
<name>SCTG_SALTY</name>
<reference key="1">
    <citation type="journal article" date="1997" name="J. Bacteriol.">
        <title>Comparative genetics of the inv-spa invasion gene complex of Salmonella enterica.</title>
        <authorList>
            <person name="Boyd E.F."/>
            <person name="Li J."/>
            <person name="Ochman H."/>
            <person name="Selander R.K."/>
        </authorList>
    </citation>
    <scope>NUCLEOTIDE SEQUENCE [GENOMIC DNA]</scope>
    <source>
        <strain>S4194</strain>
    </source>
</reference>
<reference key="2">
    <citation type="journal article" date="2001" name="Nature">
        <title>Complete genome sequence of Salmonella enterica serovar Typhimurium LT2.</title>
        <authorList>
            <person name="McClelland M."/>
            <person name="Sanderson K.E."/>
            <person name="Spieth J."/>
            <person name="Clifton S.W."/>
            <person name="Latreille P."/>
            <person name="Courtney L."/>
            <person name="Porwollik S."/>
            <person name="Ali J."/>
            <person name="Dante M."/>
            <person name="Du F."/>
            <person name="Hou S."/>
            <person name="Layman D."/>
            <person name="Leonard S."/>
            <person name="Nguyen C."/>
            <person name="Scott K."/>
            <person name="Holmes A."/>
            <person name="Grewal N."/>
            <person name="Mulvaney E."/>
            <person name="Ryan E."/>
            <person name="Sun H."/>
            <person name="Florea L."/>
            <person name="Miller W."/>
            <person name="Stoneking T."/>
            <person name="Nhan M."/>
            <person name="Waterston R."/>
            <person name="Wilson R.K."/>
        </authorList>
    </citation>
    <scope>NUCLEOTIDE SEQUENCE [LARGE SCALE GENOMIC DNA]</scope>
    <source>
        <strain>LT2 / SGSC1412 / ATCC 700720</strain>
    </source>
</reference>
<reference key="3">
    <citation type="journal article" date="1998" name="Mol. Microbiol.">
        <title>The Salmonella typhimurium InvH protein is an outer membrane lipoprotein required for the proper localization of InvG.</title>
        <authorList>
            <person name="Daefler S."/>
            <person name="Russel M."/>
        </authorList>
    </citation>
    <scope>FUNCTION</scope>
    <scope>SUBCELLULAR LOCATION</scope>
</reference>
<reference key="4">
    <citation type="journal article" date="1998" name="Mol. Microbiol.">
        <title>Salmonella InvG forms a ring-like multimer that requires the InvH lipoprotein for outer membrane localization.</title>
        <authorList>
            <person name="Crago A.M."/>
            <person name="Koronakis V."/>
        </authorList>
    </citation>
    <scope>FUNCTION</scope>
    <scope>SUBCELLULAR LOCATION</scope>
    <scope>DISRUPTION PHENOTYPE</scope>
    <source>
        <strain>SJW1103</strain>
    </source>
</reference>
<reference key="5">
    <citation type="journal article" date="2013" name="Microbes Infect.">
        <title>Deletion of invH gene in Salmonella enterica serovar Typhimurium limits the secretion of Sip effector proteins.</title>
        <authorList>
            <person name="Pati N.B."/>
            <person name="Vishwakarma V."/>
            <person name="Jaiswal S."/>
            <person name="Periaswamy B."/>
            <person name="Hardt W.D."/>
            <person name="Suar M."/>
        </authorList>
    </citation>
    <scope>FUNCTION IN VIRULENCE</scope>
    <scope>DISRUPTION PHENOTYPE</scope>
    <source>
        <strain>SB300</strain>
    </source>
</reference>
<keyword id="KW-0002">3D-structure</keyword>
<keyword id="KW-0998">Cell outer membrane</keyword>
<keyword id="KW-0449">Lipoprotein</keyword>
<keyword id="KW-0472">Membrane</keyword>
<keyword id="KW-0564">Palmitate</keyword>
<keyword id="KW-1185">Reference proteome</keyword>
<keyword id="KW-0732">Signal</keyword>
<keyword id="KW-0843">Virulence</keyword>
<gene>
    <name evidence="5" type="primary">invH</name>
    <name evidence="6" type="synonym">sctG</name>
    <name type="ordered locus">STM2900</name>
</gene>
<dbReference type="EMBL" id="U84273">
    <property type="protein sequence ID" value="AAC45070.1"/>
    <property type="molecule type" value="Genomic_DNA"/>
</dbReference>
<dbReference type="EMBL" id="AE006468">
    <property type="protein sequence ID" value="AAL21780.1"/>
    <property type="molecule type" value="Genomic_DNA"/>
</dbReference>
<dbReference type="RefSeq" id="NP_461821.1">
    <property type="nucleotide sequence ID" value="NC_003197.2"/>
</dbReference>
<dbReference type="RefSeq" id="WP_000715092.1">
    <property type="nucleotide sequence ID" value="NC_003197.2"/>
</dbReference>
<dbReference type="PDB" id="6XFJ">
    <property type="method" value="X-ray"/>
    <property type="resolution" value="1.20 A"/>
    <property type="chains" value="A/B/C/D=70-147"/>
</dbReference>
<dbReference type="PDB" id="6XFK">
    <property type="method" value="X-ray"/>
    <property type="resolution" value="1.85 A"/>
    <property type="chains" value="A=84-147"/>
</dbReference>
<dbReference type="PDB" id="6XFL">
    <property type="method" value="NMR"/>
    <property type="chains" value="A=70-147"/>
</dbReference>
<dbReference type="PDBsum" id="6XFJ"/>
<dbReference type="PDBsum" id="6XFK"/>
<dbReference type="PDBsum" id="6XFL"/>
<dbReference type="SASBDB" id="P0CL43"/>
<dbReference type="SMR" id="P0CL43"/>
<dbReference type="STRING" id="99287.STM2900"/>
<dbReference type="PaxDb" id="99287-STM2900"/>
<dbReference type="GeneID" id="1254423"/>
<dbReference type="KEGG" id="stm:STM2900"/>
<dbReference type="PATRIC" id="fig|99287.12.peg.3056"/>
<dbReference type="HOGENOM" id="CLU_123343_0_0_6"/>
<dbReference type="OMA" id="CMSLPYV"/>
<dbReference type="BioCyc" id="SENT99287:STM2900-MONOMER"/>
<dbReference type="Proteomes" id="UP000001014">
    <property type="component" value="Chromosome"/>
</dbReference>
<dbReference type="GO" id="GO:0009279">
    <property type="term" value="C:cell outer membrane"/>
    <property type="evidence" value="ECO:0007669"/>
    <property type="project" value="UniProtKB-SubCell"/>
</dbReference>
<dbReference type="InterPro" id="IPR006830">
    <property type="entry name" value="InvH"/>
</dbReference>
<dbReference type="NCBIfam" id="NF011869">
    <property type="entry name" value="PRK15341.1-2"/>
    <property type="match status" value="1"/>
</dbReference>
<dbReference type="Pfam" id="PF04741">
    <property type="entry name" value="InvH"/>
    <property type="match status" value="1"/>
</dbReference>
<dbReference type="PROSITE" id="PS51257">
    <property type="entry name" value="PROKAR_LIPOPROTEIN"/>
    <property type="match status" value="1"/>
</dbReference>
<organism>
    <name type="scientific">Salmonella typhimurium (strain LT2 / SGSC1412 / ATCC 700720)</name>
    <dbReference type="NCBI Taxonomy" id="99287"/>
    <lineage>
        <taxon>Bacteria</taxon>
        <taxon>Pseudomonadati</taxon>
        <taxon>Pseudomonadota</taxon>
        <taxon>Gammaproteobacteria</taxon>
        <taxon>Enterobacterales</taxon>
        <taxon>Enterobacteriaceae</taxon>
        <taxon>Salmonella</taxon>
    </lineage>
</organism>
<feature type="signal peptide" evidence="1">
    <location>
        <begin position="1"/>
        <end position="15"/>
    </location>
</feature>
<feature type="chain" id="PRO_0000021516" description="SPI-1 type 3 secretion system pilotin" evidence="1">
    <location>
        <begin position="16"/>
        <end position="147"/>
    </location>
</feature>
<feature type="lipid moiety-binding region" description="N-palmitoyl cysteine" evidence="1">
    <location>
        <position position="16"/>
    </location>
</feature>
<feature type="lipid moiety-binding region" description="S-diacylglycerol cysteine" evidence="1">
    <location>
        <position position="16"/>
    </location>
</feature>
<feature type="helix" evidence="7">
    <location>
        <begin position="73"/>
        <end position="85"/>
    </location>
</feature>
<feature type="helix" evidence="7">
    <location>
        <begin position="90"/>
        <end position="101"/>
    </location>
</feature>
<feature type="helix" evidence="7">
    <location>
        <begin position="104"/>
        <end position="107"/>
    </location>
</feature>
<feature type="helix" evidence="7">
    <location>
        <begin position="109"/>
        <end position="124"/>
    </location>
</feature>
<feature type="helix" evidence="7">
    <location>
        <begin position="126"/>
        <end position="128"/>
    </location>
</feature>
<feature type="helix" evidence="7">
    <location>
        <begin position="133"/>
        <end position="146"/>
    </location>
</feature>
<proteinExistence type="evidence at protein level"/>
<accession>P0CL43</accession>
<accession>P37423</accession>
<sequence>MKKFYSCLPVFLLIGCAQVPLPSSVSKPVQQPGAQKEQLANANSIDECQSLPYVPSDLAKNKSLSNHNADNSASKNSAISSSIFCEKYKQTKEQALTFFQEHPQYMRSKEDEEQLMTEFKKVLLEPGSKNLSIYQTLLAAHERLQAL</sequence>
<comment type="function">
    <text evidence="2 3 4">Involved in the synthesis of the type III secretion system (T3SS), also called injectisome, which is used to inject bacterial effector proteins into eukaryotic host cells (PubMed:9680224, PubMed:9786184). Pilot protein that is required for the proper localization of the secretin InvG/SctC in the outer membrane (PubMed:9680224, PubMed:9786184). Required for the secretion of the Sip virulence factors (PubMed:23159244, PubMed:9680224).</text>
</comment>
<comment type="subcellular location">
    <subcellularLocation>
        <location evidence="3 4">Cell outer membrane</location>
        <topology evidence="1 3">Lipid-anchor</topology>
    </subcellularLocation>
</comment>
<comment type="disruption phenotype">
    <text evidence="2 4">Mutant shows decreased levels of InvG/SctC (PubMed:9786184). Deletion of the gene reduces the invasion efficiency of the bacterium to 70-80% as compared to wild-type in vitro (PubMed:23159244). SctG/invH-ssaV double mutant shows reduced secretion of Sip effector proteins (SipA, SipB, SipC and SipD) (PubMed:23159244).</text>
</comment>
<comment type="similarity">
    <text evidence="6">Belongs to the InvH family.</text>
</comment>